<proteinExistence type="inferred from homology"/>
<accession>Q6G1X0</accession>
<dbReference type="EMBL" id="BX897699">
    <property type="protein sequence ID" value="CAF28294.1"/>
    <property type="molecule type" value="Genomic_DNA"/>
</dbReference>
<dbReference type="SMR" id="Q6G1X0"/>
<dbReference type="PaxDb" id="283166-BH15310"/>
<dbReference type="EnsemblBacteria" id="CAF28294">
    <property type="protein sequence ID" value="CAF28294"/>
    <property type="gene ID" value="BH15310"/>
</dbReference>
<dbReference type="KEGG" id="bhe:BH15310"/>
<dbReference type="eggNOG" id="COG0355">
    <property type="taxonomic scope" value="Bacteria"/>
</dbReference>
<dbReference type="Proteomes" id="UP000000421">
    <property type="component" value="Chromosome"/>
</dbReference>
<dbReference type="GO" id="GO:0005886">
    <property type="term" value="C:plasma membrane"/>
    <property type="evidence" value="ECO:0007669"/>
    <property type="project" value="UniProtKB-SubCell"/>
</dbReference>
<dbReference type="GO" id="GO:0045259">
    <property type="term" value="C:proton-transporting ATP synthase complex"/>
    <property type="evidence" value="ECO:0007669"/>
    <property type="project" value="UniProtKB-KW"/>
</dbReference>
<dbReference type="GO" id="GO:0005524">
    <property type="term" value="F:ATP binding"/>
    <property type="evidence" value="ECO:0007669"/>
    <property type="project" value="UniProtKB-UniRule"/>
</dbReference>
<dbReference type="GO" id="GO:0046933">
    <property type="term" value="F:proton-transporting ATP synthase activity, rotational mechanism"/>
    <property type="evidence" value="ECO:0007669"/>
    <property type="project" value="UniProtKB-UniRule"/>
</dbReference>
<dbReference type="CDD" id="cd12152">
    <property type="entry name" value="F1-ATPase_delta"/>
    <property type="match status" value="1"/>
</dbReference>
<dbReference type="Gene3D" id="2.60.15.10">
    <property type="entry name" value="F0F1 ATP synthase delta/epsilon subunit, N-terminal"/>
    <property type="match status" value="1"/>
</dbReference>
<dbReference type="HAMAP" id="MF_00530">
    <property type="entry name" value="ATP_synth_epsil_bac"/>
    <property type="match status" value="1"/>
</dbReference>
<dbReference type="InterPro" id="IPR001469">
    <property type="entry name" value="ATP_synth_F1_dsu/esu"/>
</dbReference>
<dbReference type="InterPro" id="IPR020546">
    <property type="entry name" value="ATP_synth_F1_dsu/esu_N"/>
</dbReference>
<dbReference type="InterPro" id="IPR036771">
    <property type="entry name" value="ATPsynth_dsu/esu_N"/>
</dbReference>
<dbReference type="NCBIfam" id="TIGR01216">
    <property type="entry name" value="ATP_synt_epsi"/>
    <property type="match status" value="1"/>
</dbReference>
<dbReference type="Pfam" id="PF02823">
    <property type="entry name" value="ATP-synt_DE_N"/>
    <property type="match status" value="1"/>
</dbReference>
<dbReference type="SUPFAM" id="SSF51344">
    <property type="entry name" value="Epsilon subunit of F1F0-ATP synthase N-terminal domain"/>
    <property type="match status" value="1"/>
</dbReference>
<evidence type="ECO:0000255" key="1">
    <source>
        <dbReference type="HAMAP-Rule" id="MF_00530"/>
    </source>
</evidence>
<keyword id="KW-0066">ATP synthesis</keyword>
<keyword id="KW-0997">Cell inner membrane</keyword>
<keyword id="KW-1003">Cell membrane</keyword>
<keyword id="KW-0139">CF(1)</keyword>
<keyword id="KW-0375">Hydrogen ion transport</keyword>
<keyword id="KW-0406">Ion transport</keyword>
<keyword id="KW-0472">Membrane</keyword>
<keyword id="KW-0813">Transport</keyword>
<reference key="1">
    <citation type="journal article" date="2004" name="Proc. Natl. Acad. Sci. U.S.A.">
        <title>The louse-borne human pathogen Bartonella quintana is a genomic derivative of the zoonotic agent Bartonella henselae.</title>
        <authorList>
            <person name="Alsmark U.C.M."/>
            <person name="Frank A.C."/>
            <person name="Karlberg E.O."/>
            <person name="Legault B.-A."/>
            <person name="Ardell D.H."/>
            <person name="Canbaeck B."/>
            <person name="Eriksson A.-S."/>
            <person name="Naeslund A.K."/>
            <person name="Handley S.A."/>
            <person name="Huvet M."/>
            <person name="La Scola B."/>
            <person name="Holmberg M."/>
            <person name="Andersson S.G.E."/>
        </authorList>
    </citation>
    <scope>NUCLEOTIDE SEQUENCE [LARGE SCALE GENOMIC DNA]</scope>
    <source>
        <strain>ATCC 49882 / DSM 28221 / CCUG 30454 / Houston 1</strain>
    </source>
</reference>
<feature type="chain" id="PRO_0000188102" description="ATP synthase epsilon chain">
    <location>
        <begin position="1"/>
        <end position="138"/>
    </location>
</feature>
<sequence length="138" mass="14818">MENNRVNHFLFELVSPEKPVFSEQVVSVVLPSASGALTVMANHAPLVASIVLGSMYVLTSSGEKLFAVCGGVANITSSGCSVLVERVVVVQHLSFHDLEQRILRVRATLEGDSNDGISHKIEDFFHQLKVGDAGLTEA</sequence>
<organism>
    <name type="scientific">Bartonella henselae (strain ATCC 49882 / DSM 28221 / CCUG 30454 / Houston 1)</name>
    <name type="common">Rochalimaea henselae</name>
    <dbReference type="NCBI Taxonomy" id="283166"/>
    <lineage>
        <taxon>Bacteria</taxon>
        <taxon>Pseudomonadati</taxon>
        <taxon>Pseudomonadota</taxon>
        <taxon>Alphaproteobacteria</taxon>
        <taxon>Hyphomicrobiales</taxon>
        <taxon>Bartonellaceae</taxon>
        <taxon>Bartonella</taxon>
    </lineage>
</organism>
<name>ATPE_BARHE</name>
<gene>
    <name evidence="1" type="primary">atpC</name>
    <name type="ordered locus">BH15310</name>
</gene>
<comment type="function">
    <text evidence="1">Produces ATP from ADP in the presence of a proton gradient across the membrane.</text>
</comment>
<comment type="subunit">
    <text>F-type ATPases have 2 components, CF(1) - the catalytic core - and CF(0) - the membrane proton channel. CF(1) has five subunits: alpha(3), beta(3), gamma(1), delta(1), epsilon(1). CF(0) has three main subunits: a, b and c.</text>
</comment>
<comment type="subcellular location">
    <subcellularLocation>
        <location evidence="1">Cell inner membrane</location>
        <topology evidence="1">Peripheral membrane protein</topology>
    </subcellularLocation>
</comment>
<comment type="similarity">
    <text evidence="1">Belongs to the ATPase epsilon chain family.</text>
</comment>
<protein>
    <recommendedName>
        <fullName evidence="1">ATP synthase epsilon chain</fullName>
    </recommendedName>
    <alternativeName>
        <fullName evidence="1">ATP synthase F1 sector epsilon subunit</fullName>
    </alternativeName>
    <alternativeName>
        <fullName evidence="1">F-ATPase epsilon subunit</fullName>
    </alternativeName>
</protein>